<accession>A0AJ45</accession>
<organism>
    <name type="scientific">Listeria welshimeri serovar 6b (strain ATCC 35897 / DSM 20650 / CCUG 15529 / CIP 8149 / NCTC 11857 / SLCC 5334 / V8)</name>
    <dbReference type="NCBI Taxonomy" id="386043"/>
    <lineage>
        <taxon>Bacteria</taxon>
        <taxon>Bacillati</taxon>
        <taxon>Bacillota</taxon>
        <taxon>Bacilli</taxon>
        <taxon>Bacillales</taxon>
        <taxon>Listeriaceae</taxon>
        <taxon>Listeria</taxon>
    </lineage>
</organism>
<comment type="function">
    <text evidence="1">One of the primary rRNA binding proteins, it binds directly to 16S rRNA where it nucleates assembly of the body of the 30S subunit.</text>
</comment>
<comment type="function">
    <text evidence="1">With S5 and S12 plays an important role in translational accuracy.</text>
</comment>
<comment type="subunit">
    <text evidence="1">Part of the 30S ribosomal subunit. Contacts protein S5. The interaction surface between S4 and S5 is involved in control of translational fidelity.</text>
</comment>
<comment type="similarity">
    <text evidence="1">Belongs to the universal ribosomal protein uS4 family.</text>
</comment>
<gene>
    <name evidence="1" type="primary">rpsD</name>
    <name type="ordered locus">lwe1609</name>
</gene>
<dbReference type="EMBL" id="AM263198">
    <property type="protein sequence ID" value="CAK21027.1"/>
    <property type="molecule type" value="Genomic_DNA"/>
</dbReference>
<dbReference type="RefSeq" id="WP_003747954.1">
    <property type="nucleotide sequence ID" value="NC_008555.1"/>
</dbReference>
<dbReference type="SMR" id="A0AJ45"/>
<dbReference type="STRING" id="386043.lwe1609"/>
<dbReference type="GeneID" id="61189486"/>
<dbReference type="KEGG" id="lwe:lwe1609"/>
<dbReference type="eggNOG" id="COG0522">
    <property type="taxonomic scope" value="Bacteria"/>
</dbReference>
<dbReference type="HOGENOM" id="CLU_092403_0_1_9"/>
<dbReference type="OrthoDB" id="9803672at2"/>
<dbReference type="Proteomes" id="UP000000779">
    <property type="component" value="Chromosome"/>
</dbReference>
<dbReference type="GO" id="GO:0015935">
    <property type="term" value="C:small ribosomal subunit"/>
    <property type="evidence" value="ECO:0007669"/>
    <property type="project" value="InterPro"/>
</dbReference>
<dbReference type="GO" id="GO:0019843">
    <property type="term" value="F:rRNA binding"/>
    <property type="evidence" value="ECO:0007669"/>
    <property type="project" value="UniProtKB-UniRule"/>
</dbReference>
<dbReference type="GO" id="GO:0003735">
    <property type="term" value="F:structural constituent of ribosome"/>
    <property type="evidence" value="ECO:0007669"/>
    <property type="project" value="InterPro"/>
</dbReference>
<dbReference type="GO" id="GO:0042274">
    <property type="term" value="P:ribosomal small subunit biogenesis"/>
    <property type="evidence" value="ECO:0007669"/>
    <property type="project" value="TreeGrafter"/>
</dbReference>
<dbReference type="GO" id="GO:0006412">
    <property type="term" value="P:translation"/>
    <property type="evidence" value="ECO:0007669"/>
    <property type="project" value="UniProtKB-UniRule"/>
</dbReference>
<dbReference type="CDD" id="cd00165">
    <property type="entry name" value="S4"/>
    <property type="match status" value="1"/>
</dbReference>
<dbReference type="FunFam" id="1.10.1050.10:FF:000001">
    <property type="entry name" value="30S ribosomal protein S4"/>
    <property type="match status" value="1"/>
</dbReference>
<dbReference type="FunFam" id="3.10.290.10:FF:000001">
    <property type="entry name" value="30S ribosomal protein S4"/>
    <property type="match status" value="1"/>
</dbReference>
<dbReference type="Gene3D" id="1.10.1050.10">
    <property type="entry name" value="Ribosomal Protein S4 Delta 41, Chain A, domain 1"/>
    <property type="match status" value="1"/>
</dbReference>
<dbReference type="Gene3D" id="3.10.290.10">
    <property type="entry name" value="RNA-binding S4 domain"/>
    <property type="match status" value="1"/>
</dbReference>
<dbReference type="HAMAP" id="MF_01306_B">
    <property type="entry name" value="Ribosomal_uS4_B"/>
    <property type="match status" value="1"/>
</dbReference>
<dbReference type="InterPro" id="IPR022801">
    <property type="entry name" value="Ribosomal_uS4"/>
</dbReference>
<dbReference type="InterPro" id="IPR005709">
    <property type="entry name" value="Ribosomal_uS4_bac-type"/>
</dbReference>
<dbReference type="InterPro" id="IPR018079">
    <property type="entry name" value="Ribosomal_uS4_CS"/>
</dbReference>
<dbReference type="InterPro" id="IPR001912">
    <property type="entry name" value="Ribosomal_uS4_N"/>
</dbReference>
<dbReference type="InterPro" id="IPR002942">
    <property type="entry name" value="S4_RNA-bd"/>
</dbReference>
<dbReference type="InterPro" id="IPR036986">
    <property type="entry name" value="S4_RNA-bd_sf"/>
</dbReference>
<dbReference type="NCBIfam" id="NF003717">
    <property type="entry name" value="PRK05327.1"/>
    <property type="match status" value="1"/>
</dbReference>
<dbReference type="NCBIfam" id="TIGR01017">
    <property type="entry name" value="rpsD_bact"/>
    <property type="match status" value="1"/>
</dbReference>
<dbReference type="PANTHER" id="PTHR11831">
    <property type="entry name" value="30S 40S RIBOSOMAL PROTEIN"/>
    <property type="match status" value="1"/>
</dbReference>
<dbReference type="PANTHER" id="PTHR11831:SF4">
    <property type="entry name" value="SMALL RIBOSOMAL SUBUNIT PROTEIN US4M"/>
    <property type="match status" value="1"/>
</dbReference>
<dbReference type="Pfam" id="PF00163">
    <property type="entry name" value="Ribosomal_S4"/>
    <property type="match status" value="1"/>
</dbReference>
<dbReference type="Pfam" id="PF01479">
    <property type="entry name" value="S4"/>
    <property type="match status" value="1"/>
</dbReference>
<dbReference type="SMART" id="SM01390">
    <property type="entry name" value="Ribosomal_S4"/>
    <property type="match status" value="1"/>
</dbReference>
<dbReference type="SMART" id="SM00363">
    <property type="entry name" value="S4"/>
    <property type="match status" value="1"/>
</dbReference>
<dbReference type="SUPFAM" id="SSF55174">
    <property type="entry name" value="Alpha-L RNA-binding motif"/>
    <property type="match status" value="1"/>
</dbReference>
<dbReference type="PROSITE" id="PS00632">
    <property type="entry name" value="RIBOSOMAL_S4"/>
    <property type="match status" value="1"/>
</dbReference>
<dbReference type="PROSITE" id="PS50889">
    <property type="entry name" value="S4"/>
    <property type="match status" value="1"/>
</dbReference>
<feature type="chain" id="PRO_0000293305" description="Small ribosomal subunit protein uS4">
    <location>
        <begin position="1"/>
        <end position="200"/>
    </location>
</feature>
<feature type="domain" description="S4 RNA-binding" evidence="1">
    <location>
        <begin position="92"/>
        <end position="170"/>
    </location>
</feature>
<feature type="region of interest" description="Disordered" evidence="2">
    <location>
        <begin position="22"/>
        <end position="43"/>
    </location>
</feature>
<name>RS4_LISW6</name>
<sequence length="200" mass="22666">MARYTGPSWKVSRRLGISLSGTGKELERRPYAPGQHGPTQRKKISEYGLQQAEKQKLRHMYGLTERQFKNTFNKAGKLQGKHGENFMILLEQRLDNIVYRLGLARTRRAARQLVNHGHITVDGKRVDIPSYQVSVGQVISVREKSAKNSAIAESLDVSSFVPEYVTFDAETLTGSLNRIPERSELAAEINEAFIVEFYSR</sequence>
<reference key="1">
    <citation type="journal article" date="2006" name="J. Bacteriol.">
        <title>Whole-genome sequence of Listeria welshimeri reveals common steps in genome reduction with Listeria innocua as compared to Listeria monocytogenes.</title>
        <authorList>
            <person name="Hain T."/>
            <person name="Steinweg C."/>
            <person name="Kuenne C.T."/>
            <person name="Billion A."/>
            <person name="Ghai R."/>
            <person name="Chatterjee S.S."/>
            <person name="Domann E."/>
            <person name="Kaerst U."/>
            <person name="Goesmann A."/>
            <person name="Bekel T."/>
            <person name="Bartels D."/>
            <person name="Kaiser O."/>
            <person name="Meyer F."/>
            <person name="Puehler A."/>
            <person name="Weisshaar B."/>
            <person name="Wehland J."/>
            <person name="Liang C."/>
            <person name="Dandekar T."/>
            <person name="Lampidis R."/>
            <person name="Kreft J."/>
            <person name="Goebel W."/>
            <person name="Chakraborty T."/>
        </authorList>
    </citation>
    <scope>NUCLEOTIDE SEQUENCE [LARGE SCALE GENOMIC DNA]</scope>
    <source>
        <strain>ATCC 35897 / DSM 20650 / CCUG 15529 / CIP 8149 / NCTC 11857 / SLCC 5334 / V8</strain>
    </source>
</reference>
<keyword id="KW-0687">Ribonucleoprotein</keyword>
<keyword id="KW-0689">Ribosomal protein</keyword>
<keyword id="KW-0694">RNA-binding</keyword>
<keyword id="KW-0699">rRNA-binding</keyword>
<protein>
    <recommendedName>
        <fullName evidence="1">Small ribosomal subunit protein uS4</fullName>
    </recommendedName>
    <alternativeName>
        <fullName evidence="3">30S ribosomal protein S4</fullName>
    </alternativeName>
</protein>
<proteinExistence type="inferred from homology"/>
<evidence type="ECO:0000255" key="1">
    <source>
        <dbReference type="HAMAP-Rule" id="MF_01306"/>
    </source>
</evidence>
<evidence type="ECO:0000256" key="2">
    <source>
        <dbReference type="SAM" id="MobiDB-lite"/>
    </source>
</evidence>
<evidence type="ECO:0000305" key="3"/>